<name>TOC75_PEA</name>
<feature type="transit peptide" description="Chloroplast">
    <location>
        <begin position="1"/>
        <end position="35"/>
    </location>
</feature>
<feature type="transit peptide" description="Chloroplast; outer membrane" evidence="3">
    <location>
        <begin position="36"/>
        <end position="131"/>
    </location>
</feature>
<feature type="chain" id="PRO_0000042823" description="Protein TOC75, chloroplastic">
    <location>
        <begin position="132"/>
        <end position="809"/>
    </location>
</feature>
<feature type="topological domain" description="Chloroplast intermembrane" evidence="1">
    <location>
        <begin position="132"/>
        <end position="143"/>
    </location>
</feature>
<feature type="transmembrane region" description="Beta stranded" evidence="1">
    <location>
        <begin position="144"/>
        <end position="152"/>
    </location>
</feature>
<feature type="topological domain" description="Cytoplasmic" evidence="1">
    <location>
        <begin position="153"/>
        <end position="160"/>
    </location>
</feature>
<feature type="transmembrane region" description="Beta stranded" evidence="1">
    <location>
        <begin position="161"/>
        <end position="169"/>
    </location>
</feature>
<feature type="topological domain" description="Chloroplast intermembrane" evidence="1">
    <location>
        <begin position="170"/>
        <end position="225"/>
    </location>
</feature>
<feature type="transmembrane region" description="Beta stranded" evidence="1">
    <location>
        <begin position="226"/>
        <end position="234"/>
    </location>
</feature>
<feature type="topological domain" description="Cytoplasmic" evidence="1">
    <location>
        <begin position="235"/>
        <end position="247"/>
    </location>
</feature>
<feature type="transmembrane region" description="Beta stranded" evidence="1">
    <location>
        <begin position="248"/>
        <end position="254"/>
    </location>
</feature>
<feature type="topological domain" description="Chloroplast intermembrane" evidence="1">
    <location>
        <begin position="255"/>
        <end position="357"/>
    </location>
</feature>
<feature type="transmembrane region" description="Beta stranded" evidence="1">
    <location>
        <begin position="358"/>
        <end position="365"/>
    </location>
</feature>
<feature type="topological domain" description="Cytoplasmic" evidence="1">
    <location>
        <begin position="366"/>
        <end position="410"/>
    </location>
</feature>
<feature type="transmembrane region" description="Beta stranded" evidence="1">
    <location>
        <begin position="411"/>
        <end position="418"/>
    </location>
</feature>
<feature type="topological domain" description="Chloroplast intermembrane" evidence="1">
    <location>
        <begin position="419"/>
        <end position="427"/>
    </location>
</feature>
<feature type="transmembrane region" description="Beta stranded" evidence="1">
    <location>
        <begin position="428"/>
        <end position="436"/>
    </location>
</feature>
<feature type="topological domain" description="Cytoplasmic" evidence="1">
    <location>
        <begin position="437"/>
        <end position="442"/>
    </location>
</feature>
<feature type="transmembrane region" description="Beta stranded" evidence="1">
    <location>
        <begin position="443"/>
        <end position="452"/>
    </location>
</feature>
<feature type="topological domain" description="Chloroplast intermembrane" evidence="1">
    <location>
        <begin position="453"/>
        <end position="464"/>
    </location>
</feature>
<feature type="transmembrane region" description="Beta stranded" evidence="1">
    <location>
        <begin position="465"/>
        <end position="473"/>
    </location>
</feature>
<feature type="topological domain" description="Cytoplasmic" evidence="1">
    <location>
        <begin position="474"/>
        <end position="500"/>
    </location>
</feature>
<feature type="transmembrane region" description="Beta stranded" evidence="1">
    <location>
        <begin position="501"/>
        <end position="509"/>
    </location>
</feature>
<feature type="topological domain" description="Chloroplast intermembrane" evidence="1">
    <location>
        <begin position="510"/>
        <end position="553"/>
    </location>
</feature>
<feature type="transmembrane region" description="Beta stranded" evidence="1">
    <location>
        <begin position="554"/>
        <end position="561"/>
    </location>
</feature>
<feature type="topological domain" description="Cytoplasmic" evidence="1">
    <location>
        <begin position="562"/>
        <end position="569"/>
    </location>
</feature>
<feature type="transmembrane region" description="Beta stranded" evidence="1">
    <location>
        <begin position="570"/>
        <end position="577"/>
    </location>
</feature>
<feature type="topological domain" description="Chloroplast intermembrane" evidence="1">
    <location>
        <begin position="578"/>
        <end position="684"/>
    </location>
</feature>
<feature type="transmembrane region" description="Beta stranded" evidence="1">
    <location>
        <begin position="685"/>
        <end position="693"/>
    </location>
</feature>
<feature type="topological domain" description="Cytoplasmic" evidence="1">
    <location>
        <begin position="694"/>
        <end position="705"/>
    </location>
</feature>
<feature type="transmembrane region" description="Beta stranded" evidence="1">
    <location>
        <begin position="706"/>
        <end position="714"/>
    </location>
</feature>
<feature type="topological domain" description="Chloroplast intermembrane" evidence="1">
    <location>
        <begin position="715"/>
        <end position="776"/>
    </location>
</feature>
<feature type="transmembrane region" description="Beta stranded" evidence="1">
    <location>
        <begin position="777"/>
        <end position="783"/>
    </location>
</feature>
<feature type="topological domain" description="Cytoplasmic" evidence="1">
    <location>
        <begin position="784"/>
        <end position="797"/>
    </location>
</feature>
<feature type="transmembrane region" description="Beta stranded" evidence="1">
    <location>
        <begin position="798"/>
        <end position="805"/>
    </location>
</feature>
<feature type="topological domain" description="Chloroplast intermembrane" evidence="1">
    <location>
        <begin position="806"/>
        <end position="809"/>
    </location>
</feature>
<feature type="region of interest" description="Disordered" evidence="2">
    <location>
        <begin position="1"/>
        <end position="44"/>
    </location>
</feature>
<feature type="compositionally biased region" description="Polar residues" evidence="2">
    <location>
        <begin position="1"/>
        <end position="17"/>
    </location>
</feature>
<feature type="mutagenesis site" description="Reduction of processed protein." evidence="4">
    <location>
        <begin position="53"/>
        <end position="77"/>
    </location>
</feature>
<feature type="mutagenesis site" description="Mistargeting to the stroma." evidence="4">
    <location>
        <begin position="92"/>
        <end position="100"/>
    </location>
</feature>
<feature type="mutagenesis site" description="Mistargeting to the stroma.">
    <original>GGAGGGGG</original>
    <variation>SAAAAAAA</variation>
    <location>
        <begin position="92"/>
        <end position="99"/>
    </location>
</feature>
<feature type="mutagenesis site" description="Reduction of processed protein by 90%; when associated with P-131." evidence="4">
    <original>A</original>
    <variation>G</variation>
    <location>
        <position position="129"/>
    </location>
</feature>
<feature type="mutagenesis site" description="Reduction of processed protein by 90%; when associated with G-129." evidence="4">
    <original>A</original>
    <variation>P</variation>
    <location>
        <position position="131"/>
    </location>
</feature>
<feature type="mutagenesis site" description="Reduction of processed protein by more than 50%; when associated with Q-133." evidence="4">
    <original>D</original>
    <variation>N</variation>
    <location>
        <position position="132"/>
    </location>
</feature>
<feature type="mutagenesis site" description="Reduction of processed protein by 50%. Reduction of processed protein by more than 50%; when associated with N-132." evidence="4">
    <original>E</original>
    <variation>Q</variation>
    <location>
        <position position="133"/>
    </location>
</feature>
<feature type="strand" evidence="12">
    <location>
        <begin position="244"/>
        <end position="249"/>
    </location>
</feature>
<feature type="helix" evidence="12">
    <location>
        <begin position="267"/>
        <end position="287"/>
    </location>
</feature>
<feature type="strand" evidence="12">
    <location>
        <begin position="288"/>
        <end position="290"/>
    </location>
</feature>
<feature type="helix" evidence="12">
    <location>
        <begin position="295"/>
        <end position="308"/>
    </location>
</feature>
<feature type="helix" evidence="12">
    <location>
        <begin position="313"/>
        <end position="330"/>
    </location>
</feature>
<feature type="strand" evidence="12">
    <location>
        <begin position="336"/>
        <end position="341"/>
    </location>
</feature>
<feature type="strand" evidence="12">
    <location>
        <begin position="345"/>
        <end position="353"/>
    </location>
</feature>
<evidence type="ECO:0000255" key="1"/>
<evidence type="ECO:0000256" key="2">
    <source>
        <dbReference type="SAM" id="MobiDB-lite"/>
    </source>
</evidence>
<evidence type="ECO:0000269" key="3">
    <source>
    </source>
</evidence>
<evidence type="ECO:0000269" key="4">
    <source>
    </source>
</evidence>
<evidence type="ECO:0000269" key="5">
    <source>
    </source>
</evidence>
<evidence type="ECO:0000269" key="6">
    <source>
    </source>
</evidence>
<evidence type="ECO:0000269" key="7">
    <source>
    </source>
</evidence>
<evidence type="ECO:0000269" key="8">
    <source>
    </source>
</evidence>
<evidence type="ECO:0000269" key="9">
    <source>
    </source>
</evidence>
<evidence type="ECO:0000269" key="10">
    <source>
    </source>
</evidence>
<evidence type="ECO:0000305" key="11"/>
<evidence type="ECO:0007829" key="12">
    <source>
        <dbReference type="PDB" id="8DN7"/>
    </source>
</evidence>
<protein>
    <recommendedName>
        <fullName>Protein TOC75, chloroplastic</fullName>
    </recommendedName>
    <alternativeName>
        <fullName>75 kDa chloroplast outer envelope protein</fullName>
    </alternativeName>
    <alternativeName>
        <fullName>75 kDa translocon at the outer-envelope membrane of chloroplasts</fullName>
    </alternativeName>
    <alternativeName>
        <fullName>Import intermediate-associated protein of 75 kDa</fullName>
    </alternativeName>
</protein>
<reference key="1">
    <citation type="journal article" date="1994" name="Science">
        <title>Isolation of components of the chloroplast protein import machinery.</title>
        <authorList>
            <person name="Schnell D.J."/>
            <person name="Kessler F."/>
            <person name="Blobel G."/>
        </authorList>
    </citation>
    <scope>NUCLEOTIDE SEQUENCE [MRNA]</scope>
    <scope>PROTEIN SEQUENCE OF 179-189; 304-318; 369-387; 507-517 AND 742-758</scope>
    <scope>FUNCTION</scope>
    <scope>SUBCELLULAR LOCATION</scope>
</reference>
<reference key="2">
    <citation type="journal article" date="1995" name="EMBO J.">
        <title>A component of the chloroplastic protein import apparatus is targeted to the outer envelope membrane via a novel pathway.</title>
        <authorList>
            <person name="Tranel P.J."/>
            <person name="Froehlich J."/>
            <person name="Goyal A."/>
            <person name="Keegstra K."/>
        </authorList>
    </citation>
    <scope>NUCLEOTIDE SEQUENCE [MRNA]</scope>
    <scope>PROTEIN SEQUENCE OF 136-150; 185-196; 360-367; 532-545 AND 642-660</scope>
    <scope>FUNCTION</scope>
    <scope>SUBCELLULAR LOCATION</scope>
    <scope>TISSUE SPECIFICITY</scope>
    <source>
        <strain>cv. Little Marvel</strain>
        <tissue>Leaf</tissue>
    </source>
</reference>
<reference key="3">
    <citation type="journal article" date="2000" name="Biol. Chem.">
        <title>Topology studies of the chloroplast protein import channel Toc75.</title>
        <authorList>
            <person name="Sveshnikova N."/>
            <person name="Grimm R."/>
            <person name="Soll J."/>
            <person name="Schleiff E."/>
        </authorList>
    </citation>
    <scope>PROTEIN SEQUENCE OF 132-135; 387-389 AND 411-414</scope>
    <scope>TOPOLOGY</scope>
</reference>
<reference key="4">
    <citation type="journal article" date="1995" name="FEBS Lett.">
        <title>Copper chloride, an inhibitor of protein import into chloroplasts.</title>
        <authorList>
            <person name="Seedorf M."/>
            <person name="Soll J."/>
        </authorList>
    </citation>
    <scope>TOC CORE COMPLEX COMPOSITION</scope>
</reference>
<reference key="5">
    <citation type="journal article" date="1996" name="Plant Cell">
        <title>A novel, bipartite transit peptide targets OEP75 to the outer membrane of the chloroplastic envelope.</title>
        <authorList>
            <person name="Tranel P.J."/>
            <person name="Keegstra K."/>
        </authorList>
    </citation>
    <scope>PROTEOLYTIC PROCESSING</scope>
    <scope>SUBCELLULAR LOCATION</scope>
</reference>
<reference key="6">
    <citation type="journal article" date="1997" name="EMBO J.">
        <title>Stable association of chloroplastic precursors with protein translocation complexes that contain proteins from both envelope membranes and a stromal Hsp100 molecular chaperone.</title>
        <authorList>
            <person name="Nielsen E."/>
            <person name="Akita M."/>
            <person name="Davila-Aponte J."/>
            <person name="Keegstra K."/>
        </authorList>
    </citation>
    <scope>FUNCTION</scope>
    <scope>INTERACTION BETWEEN TOC COMPLEXES AND PRSS</scope>
</reference>
<reference key="7">
    <citation type="journal article" date="1997" name="EMBO J.">
        <title>The chloroplastic protein import machinery contains a Rieske-type iron-sulfur cluster and a mononuclear iron-binding protein.</title>
        <authorList>
            <person name="Caliebe A."/>
            <person name="Grimm R."/>
            <person name="Kaiser G."/>
            <person name="Luebeck J."/>
            <person name="Soll J."/>
            <person name="Heins L."/>
        </authorList>
    </citation>
    <scope>IMPORT COMPLEX COMPOSITION</scope>
</reference>
<reference key="8">
    <citation type="journal article" date="1997" name="EMBO J.">
        <title>Reconstitution of a chloroplast protein import channel.</title>
        <authorList>
            <person name="Hinnah S.C."/>
            <person name="Hill K."/>
            <person name="Wagner R."/>
            <person name="Schlicher T."/>
            <person name="Soll J."/>
        </authorList>
    </citation>
    <scope>FUNCTION</scope>
    <scope>TOPOLOGY</scope>
</reference>
<reference key="9">
    <citation type="journal article" date="1997" name="J. Cell Biol.">
        <title>Identification of protein transport complexes in the chloroplastic envelope membranes via chemical cross-linking.</title>
        <authorList>
            <person name="Akita M."/>
            <person name="Nielsen E."/>
            <person name="Keegstra K."/>
        </authorList>
    </citation>
    <scope>TOC CORE COMPLEX AND IMPORT COMPLEX COMPOSITIONS</scope>
</reference>
<reference key="10">
    <citation type="journal article" date="1997" name="Trends Cell Biol.">
        <title>A consensus nomenclature for the protein-import components of the chloroplast envelope.</title>
        <authorList>
            <person name="Schnell D.J."/>
            <person name="Blobel G."/>
            <person name="Keegstra K."/>
            <person name="Kessler F."/>
            <person name="Ko K."/>
            <person name="Soll J."/>
        </authorList>
    </citation>
    <scope>NOMENCLATURE</scope>
</reference>
<reference key="11">
    <citation type="journal article" date="2003" name="Plant J.">
        <title>A polyglycine stretch is necessary for proper targeting of the protein translocation channel precursor to the outer envelope membrane of chloroplasts.</title>
        <authorList>
            <person name="Inoue K."/>
            <person name="Keegstra K."/>
        </authorList>
    </citation>
    <scope>PROTEOLYTIC PROCESSING</scope>
    <scope>MUTAGENESIS OF 53-LEU--HIS-77; 92-GLY--GLY-100; ALA-129; ALA-131; ASP-132 AND GLU-133</scope>
</reference>
<reference key="12">
    <citation type="journal article" date="2004" name="Plant Cell">
        <title>Import pathways of chloroplast interior proteins and the outer-membrane protein OEP14 converge at Toc75.</title>
        <authorList>
            <person name="Tu S.-L."/>
            <person name="Chen L.-J."/>
            <person name="Smith M.D."/>
            <person name="Su Y.-S."/>
            <person name="Schnell D.J."/>
            <person name="Li H.-M."/>
        </authorList>
    </citation>
    <scope>FUNCTION</scope>
    <scope>INTERACTION WITH OEP14</scope>
</reference>
<organism>
    <name type="scientific">Pisum sativum</name>
    <name type="common">Garden pea</name>
    <name type="synonym">Lathyrus oleraceus</name>
    <dbReference type="NCBI Taxonomy" id="3888"/>
    <lineage>
        <taxon>Eukaryota</taxon>
        <taxon>Viridiplantae</taxon>
        <taxon>Streptophyta</taxon>
        <taxon>Embryophyta</taxon>
        <taxon>Tracheophyta</taxon>
        <taxon>Spermatophyta</taxon>
        <taxon>Magnoliopsida</taxon>
        <taxon>eudicotyledons</taxon>
        <taxon>Gunneridae</taxon>
        <taxon>Pentapetalae</taxon>
        <taxon>rosids</taxon>
        <taxon>fabids</taxon>
        <taxon>Fabales</taxon>
        <taxon>Fabaceae</taxon>
        <taxon>Papilionoideae</taxon>
        <taxon>50 kb inversion clade</taxon>
        <taxon>NPAAA clade</taxon>
        <taxon>Hologalegina</taxon>
        <taxon>IRL clade</taxon>
        <taxon>Fabeae</taxon>
        <taxon>Pisum</taxon>
    </lineage>
</organism>
<accession>Q43715</accession>
<proteinExistence type="evidence at protein level"/>
<sequence>MRTSVIPNRLTPTLTTHPSRRRNDHITTRTSSLKCHLSPSSGDNNDSFNSSLLKTISTTVAVSSAAASAFFLTGSLHSPFPNFSGLNAAAGGGAGGGGGGSSSSGGGGGGWFNGDEGSFWSRILSPARAIADEPKSEDWDSHELPADITVLLGRLSGFKKYKISDILFFDRNKKSKVETQDSFLDMVSLKPGGVYTKAQLQKELESLATCGMFEKVDMEGKTNADGSLGLTISFAESMWERADRFRCINVGLMGQSKPVEMDPDMSEKEKIEFFRRQEREYKRRISSARPCLLPTSVHEEIKDMLAEQGRVSARLLQKIRDRVQSWYHEEGYACAQVVNFGNLNTREVVCEVVEGDITKLSIQYLDKLGNVVEGNTEGPVVQRELPKQLLPGHTFNIEAGKQALRNINSLALFSNIEVNPRPDEMNEGSIIVEIKLKELEQKSAEVSTEWSIVPGRGGRPTLASLQPGGTITFEHRNLQGLNRSLTGSVTTSNFLNPQDDLAFKMEYAHPYLDGVDNPRNRTLRVSCFNSRKLSPVFTGGPGVDEVPSIWVDRAGVKANITENFSRQSKFTYGLVMEEIITRDESNHICSNGQRVLPNGAISADGPPTTLSGTGIDRMAFLQANITRDNTRFVNGTIVGSRNMFQVDQGLGVGSNFPFFNRHQLTVTKFLQLMSVEEGAGKSPPPVLVLHGHYGGCVGDLPSYDAFTLGGPYSVRGYNMGEIGAARNILELAAEIRIPIKGTHVYAFAEHGTDLGSSKDVKGNPTVVYRRMGQGSSYGAGMKLGLVRAEYAVDHNSGTGAVFFRFGERF</sequence>
<keyword id="KW-0002">3D-structure</keyword>
<keyword id="KW-0150">Chloroplast</keyword>
<keyword id="KW-0903">Direct protein sequencing</keyword>
<keyword id="KW-0472">Membrane</keyword>
<keyword id="KW-0934">Plastid</keyword>
<keyword id="KW-1002">Plastid outer membrane</keyword>
<keyword id="KW-0653">Protein transport</keyword>
<keyword id="KW-0809">Transit peptide</keyword>
<keyword id="KW-0812">Transmembrane</keyword>
<keyword id="KW-1134">Transmembrane beta strand</keyword>
<keyword id="KW-0813">Transport</keyword>
<gene>
    <name type="primary">TOC75</name>
    <name type="synonym">IAP75</name>
    <name type="synonym">OEP75</name>
</gene>
<dbReference type="EMBL" id="L36858">
    <property type="protein sequence ID" value="AAA53275.1"/>
    <property type="molecule type" value="mRNA"/>
</dbReference>
<dbReference type="EMBL" id="X83767">
    <property type="protein sequence ID" value="CAA58720.1"/>
    <property type="molecule type" value="mRNA"/>
</dbReference>
<dbReference type="PIR" id="S55344">
    <property type="entry name" value="S55344"/>
</dbReference>
<dbReference type="PDB" id="8DN7">
    <property type="method" value="X-ray"/>
    <property type="resolution" value="2.00 A"/>
    <property type="chains" value="C/E=132-440"/>
</dbReference>
<dbReference type="PDBsum" id="8DN7"/>
<dbReference type="SASBDB" id="Q43715"/>
<dbReference type="SMR" id="Q43715"/>
<dbReference type="DIP" id="DIP-904N"/>
<dbReference type="IntAct" id="Q43715">
    <property type="interactions" value="6"/>
</dbReference>
<dbReference type="MINT" id="Q43715"/>
<dbReference type="TCDB" id="1.B.33.2.1">
    <property type="family name" value="the outer membrane protein insertion porin (bam complex) (ompip) family"/>
</dbReference>
<dbReference type="OrthoDB" id="1161695at2759"/>
<dbReference type="GO" id="GO:0009707">
    <property type="term" value="C:chloroplast outer membrane"/>
    <property type="evidence" value="ECO:0007669"/>
    <property type="project" value="UniProtKB-SubCell"/>
</dbReference>
<dbReference type="GO" id="GO:0015450">
    <property type="term" value="F:protein-transporting ATPase activity"/>
    <property type="evidence" value="ECO:0007669"/>
    <property type="project" value="InterPro"/>
</dbReference>
<dbReference type="GO" id="GO:0009658">
    <property type="term" value="P:chloroplast organization"/>
    <property type="evidence" value="ECO:0007669"/>
    <property type="project" value="TreeGrafter"/>
</dbReference>
<dbReference type="GO" id="GO:0006886">
    <property type="term" value="P:intracellular protein transport"/>
    <property type="evidence" value="ECO:0007669"/>
    <property type="project" value="InterPro"/>
</dbReference>
<dbReference type="GO" id="GO:0045037">
    <property type="term" value="P:protein import into chloroplast stroma"/>
    <property type="evidence" value="ECO:0007669"/>
    <property type="project" value="TreeGrafter"/>
</dbReference>
<dbReference type="FunFam" id="2.40.160.50:FF:000004">
    <property type="entry name" value="Protein TOC75-3 chloroplastic"/>
    <property type="match status" value="1"/>
</dbReference>
<dbReference type="Gene3D" id="3.10.20.310">
    <property type="entry name" value="membrane protein fhac"/>
    <property type="match status" value="2"/>
</dbReference>
<dbReference type="Gene3D" id="2.40.160.50">
    <property type="entry name" value="membrane protein fhac: a member of the omp85/tpsb transporter family"/>
    <property type="match status" value="1"/>
</dbReference>
<dbReference type="InterPro" id="IPR000184">
    <property type="entry name" value="Bac_surfAg_D15"/>
</dbReference>
<dbReference type="InterPro" id="IPR039910">
    <property type="entry name" value="D15-like"/>
</dbReference>
<dbReference type="InterPro" id="IPR005689">
    <property type="entry name" value="IAP75"/>
</dbReference>
<dbReference type="NCBIfam" id="TIGR00992">
    <property type="entry name" value="3a0901s03IAP75"/>
    <property type="match status" value="1"/>
</dbReference>
<dbReference type="PANTHER" id="PTHR12815:SF42">
    <property type="entry name" value="BACTERIAL SURFACE ANTIGEN (D15) DOMAIN-CONTAINING PROTEIN"/>
    <property type="match status" value="1"/>
</dbReference>
<dbReference type="PANTHER" id="PTHR12815">
    <property type="entry name" value="SORTING AND ASSEMBLY MACHINERY SAMM50 PROTEIN FAMILY MEMBER"/>
    <property type="match status" value="1"/>
</dbReference>
<dbReference type="Pfam" id="PF01103">
    <property type="entry name" value="Omp85"/>
    <property type="match status" value="1"/>
</dbReference>
<dbReference type="Pfam" id="PF25282">
    <property type="entry name" value="POTRA1_3_Toc75"/>
    <property type="match status" value="2"/>
</dbReference>
<dbReference type="Pfam" id="PF25280">
    <property type="entry name" value="POTRA2_Toc75"/>
    <property type="match status" value="1"/>
</dbReference>
<comment type="function">
    <text evidence="5 6 7 9 10">Mediates the insertion of proteins targeted to the outer membrane of chloroplasts. Required for the import of protein precursors into chloroplasts. Forms the voltage-dependent preprotein translocation channels (hydrophilic beta barrel) of the TOC complex in the chloroplastic outer membrane. The narrowest inner diameter of this channel is approximately 14 Angstroms.</text>
</comment>
<comment type="subunit">
    <text evidence="5 9">Part of the TOC core complex that includes a protein for the specific recognition of transit peptides surrounded by a ring composed of four proteins forming translocation channels, and four to five GTP-binding proteins providing energy. This core complex can interact with components of the TIC complex to form a larger import complex. Chloroplastic protein precursors such as prSS (precursor of the RuBisCO small subunit) also interact with these complexes. TOC75 interacts with OEP14, TOC34/OEP34, TOC86/OEP86, TIC55, TIC110/IEP110 and CLPC.</text>
</comment>
<comment type="interaction">
    <interactant intactId="EBI-638469">
        <id>Q43715</id>
    </interactant>
    <interactant intactId="EBI-638487">
        <id>Q9MUK5</id>
        <label>TOC64</label>
    </interactant>
    <organismsDiffer>false</organismsDiffer>
    <experiments>2</experiments>
</comment>
<comment type="subcellular location">
    <subcellularLocation>
        <location evidence="6 7 8">Plastid</location>
        <location evidence="6 7 8">Chloroplast outer membrane</location>
        <topology evidence="6 7 8">Multi-pass membrane protein</topology>
    </subcellularLocation>
</comment>
<comment type="tissue specificity">
    <text evidence="6">Mostly expressed in young leaves, also present in old leaves, roots and stems (at protein level).</text>
</comment>
<comment type="domain">
    <text>Transmembrane regions consist mainly of membrane-spanning sided beta-sheets, which are not predicted by sequence analysis tools.</text>
</comment>
<comment type="similarity">
    <text evidence="11">Belongs to the TOC75 family.</text>
</comment>